<sequence>MARYRHSRSRSRXRYRRRRRRRSRYRSRRRRYRGSRRSRSRRRGRRRGYSRRRYSRRRRRY</sequence>
<keyword id="KW-0158">Chromosome</keyword>
<keyword id="KW-0217">Developmental protein</keyword>
<keyword id="KW-0221">Differentiation</keyword>
<keyword id="KW-0226">DNA condensation</keyword>
<keyword id="KW-0238">DNA-binding</keyword>
<keyword id="KW-0544">Nucleosome core</keyword>
<keyword id="KW-0539">Nucleus</keyword>
<keyword id="KW-0744">Spermatogenesis</keyword>
<protein>
    <recommendedName>
        <fullName>Sperm protamine P1</fullName>
    </recommendedName>
</protein>
<accession>Q9GLP8</accession>
<name>HSP1_POTLO</name>
<proteinExistence type="evidence at transcript level"/>
<gene>
    <name type="primary">PRM1</name>
</gene>
<feature type="chain" id="PRO_0000191541" description="Sperm protamine P1">
    <location>
        <begin position="1"/>
        <end position="61"/>
    </location>
</feature>
<feature type="region of interest" description="Disordered" evidence="1">
    <location>
        <begin position="1"/>
        <end position="61"/>
    </location>
</feature>
<evidence type="ECO:0000256" key="1">
    <source>
        <dbReference type="SAM" id="MobiDB-lite"/>
    </source>
</evidence>
<evidence type="ECO:0000305" key="2"/>
<organism>
    <name type="scientific">Potorous longipes</name>
    <name type="common">Long-footed potoroo</name>
    <dbReference type="NCBI Taxonomy" id="55310"/>
    <lineage>
        <taxon>Eukaryota</taxon>
        <taxon>Metazoa</taxon>
        <taxon>Chordata</taxon>
        <taxon>Craniata</taxon>
        <taxon>Vertebrata</taxon>
        <taxon>Euteleostomi</taxon>
        <taxon>Mammalia</taxon>
        <taxon>Metatheria</taxon>
        <taxon>Diprotodontia</taxon>
        <taxon>Potoroidae</taxon>
        <taxon>Potorous</taxon>
    </lineage>
</organism>
<dbReference type="EMBL" id="AF187548">
    <property type="protein sequence ID" value="AAG27965.1"/>
    <property type="molecule type" value="Genomic_DNA"/>
</dbReference>
<dbReference type="GO" id="GO:0000786">
    <property type="term" value="C:nucleosome"/>
    <property type="evidence" value="ECO:0007669"/>
    <property type="project" value="UniProtKB-KW"/>
</dbReference>
<dbReference type="GO" id="GO:0005634">
    <property type="term" value="C:nucleus"/>
    <property type="evidence" value="ECO:0007669"/>
    <property type="project" value="UniProtKB-SubCell"/>
</dbReference>
<dbReference type="GO" id="GO:0003677">
    <property type="term" value="F:DNA binding"/>
    <property type="evidence" value="ECO:0007669"/>
    <property type="project" value="UniProtKB-KW"/>
</dbReference>
<dbReference type="GO" id="GO:0030154">
    <property type="term" value="P:cell differentiation"/>
    <property type="evidence" value="ECO:0007669"/>
    <property type="project" value="UniProtKB-KW"/>
</dbReference>
<dbReference type="GO" id="GO:0030261">
    <property type="term" value="P:chromosome condensation"/>
    <property type="evidence" value="ECO:0007669"/>
    <property type="project" value="UniProtKB-KW"/>
</dbReference>
<dbReference type="GO" id="GO:0007283">
    <property type="term" value="P:spermatogenesis"/>
    <property type="evidence" value="ECO:0007669"/>
    <property type="project" value="UniProtKB-KW"/>
</dbReference>
<dbReference type="PROSITE" id="PS00048">
    <property type="entry name" value="PROTAMINE_P1"/>
    <property type="match status" value="1"/>
</dbReference>
<reference key="1">
    <citation type="journal article" date="2000" name="J. Mammal. Evol.">
        <title>Intergeneric relationships among Macropodoidea (Metatheria: Diprotodontia) and the chronicle of kangaroo evolution.</title>
        <authorList>
            <person name="Burk A."/>
            <person name="Springer M.S."/>
        </authorList>
    </citation>
    <scope>NUCLEOTIDE SEQUENCE [GENOMIC DNA]</scope>
</reference>
<comment type="function">
    <text>Protamines substitute for histones in the chromatin of sperm during the haploid phase of spermatogenesis. They compact sperm DNA into a highly condensed, stable and inactive complex.</text>
</comment>
<comment type="subcellular location">
    <subcellularLocation>
        <location>Nucleus</location>
    </subcellularLocation>
    <subcellularLocation>
        <location>Chromosome</location>
    </subcellularLocation>
</comment>
<comment type="tissue specificity">
    <text>Testis.</text>
</comment>
<comment type="similarity">
    <text evidence="2">Belongs to the protamine P1 family.</text>
</comment>